<comment type="function">
    <text evidence="2">Required to maintain microtubule bundles in inner ear supporting cells, affording them with mechanical stiffness to transmit sound energy through the cochlea.</text>
</comment>
<comment type="interaction">
    <interactant intactId="EBI-12952691">
        <id>O43903-2</id>
    </interactant>
    <interactant intactId="EBI-12018146">
        <id>Q8IYX1</id>
        <label>TBC1D21</label>
    </interactant>
    <organismsDiffer>false</organismsDiffer>
    <experiments>5</experiments>
</comment>
<comment type="subcellular location">
    <subcellularLocation>
        <location evidence="6">Cytoplasm</location>
        <location evidence="6">Cytoskeleton</location>
        <location evidence="6">Stress fiber</location>
    </subcellularLocation>
    <subcellularLocation>
        <location evidence="2">Membrane</location>
        <topology evidence="2">Peripheral membrane protein</topology>
    </subcellularLocation>
    <text evidence="2">Component of the microfilament system. Colocalizes with actin fibers at the cell border and along the stress fibers in growth-arrested fibroblasts. Mainly membrane-associated. When hyperphosphorylated, accumulates at membrane ruffles (By similarity). Colocalizes with detyrosinated alpha-tubulin along the length of microtubule bundles in inner and outer pillar cells (By similarity).</text>
</comment>
<comment type="alternative products">
    <event type="alternative splicing"/>
    <isoform>
        <id>O43903-1</id>
        <name>1</name>
        <sequence type="displayed"/>
    </isoform>
    <isoform>
        <id>O43903-2</id>
        <name>2</name>
        <sequence type="described" ref="VSP_055080 VSP_055081"/>
    </isoform>
</comment>
<comment type="tissue specificity">
    <text>Ubiquitously expressed with highest levels in liver, lung, and kidney. Not found in spleen.</text>
</comment>
<comment type="developmental stage">
    <text>Specifically expressed at growth arrest.</text>
</comment>
<comment type="PTM">
    <text>Cleaved, during apoptosis, on a specific aspartic residue by caspases.</text>
</comment>
<comment type="PTM">
    <text evidence="1">Phosphorylated on serine residues during the G0-G1 transition phase.</text>
</comment>
<comment type="disease" evidence="7">
    <disease id="DI-06921">
        <name>Deafness, autosomal recessive, 125</name>
        <acronym>DFNB125</acronym>
        <description>A form of non-syndromic deafness characterized by congenital sensorineural hearing loss. Sensorineural hearing loss results from damage to the neural receptors of the inner ear, the nerve pathways to the brain, or the area of the brain that receives sound information.</description>
        <dbReference type="MIM" id="620877"/>
    </disease>
    <text>The disease is caused by variants affecting the gene represented in this entry.</text>
</comment>
<comment type="similarity">
    <text evidence="9">Belongs to the GAS2 family.</text>
</comment>
<reference key="1">
    <citation type="journal article" date="1998" name="Genomics">
        <title>cDNA characterization and chromosome mapping of the human GAS2 gene.</title>
        <authorList>
            <person name="Collavin L."/>
            <person name="Buzzai M."/>
            <person name="Saccone S."/>
            <person name="Bernard L."/>
            <person name="Federico C."/>
            <person name="della Valle G."/>
            <person name="Brancolini C."/>
            <person name="Schneider C."/>
        </authorList>
    </citation>
    <scope>NUCLEOTIDE SEQUENCE [MRNA] (ISOFORM 1)</scope>
    <source>
        <tissue>Kidney</tissue>
    </source>
</reference>
<reference key="2">
    <citation type="submission" date="2004-05" db="EMBL/GenBank/DDBJ databases">
        <title>Cloning of human full open reading frames in Gateway(TM) system entry vector (pDONR201).</title>
        <authorList>
            <person name="Ebert L."/>
            <person name="Schick M."/>
            <person name="Neubert P."/>
            <person name="Schatten R."/>
            <person name="Henze S."/>
            <person name="Korn B."/>
        </authorList>
    </citation>
    <scope>NUCLEOTIDE SEQUENCE [LARGE SCALE MRNA] (ISOFORM 1)</scope>
</reference>
<reference key="3">
    <citation type="journal article" date="2004" name="Nat. Genet.">
        <title>Complete sequencing and characterization of 21,243 full-length human cDNAs.</title>
        <authorList>
            <person name="Ota T."/>
            <person name="Suzuki Y."/>
            <person name="Nishikawa T."/>
            <person name="Otsuki T."/>
            <person name="Sugiyama T."/>
            <person name="Irie R."/>
            <person name="Wakamatsu A."/>
            <person name="Hayashi K."/>
            <person name="Sato H."/>
            <person name="Nagai K."/>
            <person name="Kimura K."/>
            <person name="Makita H."/>
            <person name="Sekine M."/>
            <person name="Obayashi M."/>
            <person name="Nishi T."/>
            <person name="Shibahara T."/>
            <person name="Tanaka T."/>
            <person name="Ishii S."/>
            <person name="Yamamoto J."/>
            <person name="Saito K."/>
            <person name="Kawai Y."/>
            <person name="Isono Y."/>
            <person name="Nakamura Y."/>
            <person name="Nagahari K."/>
            <person name="Murakami K."/>
            <person name="Yasuda T."/>
            <person name="Iwayanagi T."/>
            <person name="Wagatsuma M."/>
            <person name="Shiratori A."/>
            <person name="Sudo H."/>
            <person name="Hosoiri T."/>
            <person name="Kaku Y."/>
            <person name="Kodaira H."/>
            <person name="Kondo H."/>
            <person name="Sugawara M."/>
            <person name="Takahashi M."/>
            <person name="Kanda K."/>
            <person name="Yokoi T."/>
            <person name="Furuya T."/>
            <person name="Kikkawa E."/>
            <person name="Omura Y."/>
            <person name="Abe K."/>
            <person name="Kamihara K."/>
            <person name="Katsuta N."/>
            <person name="Sato K."/>
            <person name="Tanikawa M."/>
            <person name="Yamazaki M."/>
            <person name="Ninomiya K."/>
            <person name="Ishibashi T."/>
            <person name="Yamashita H."/>
            <person name="Murakawa K."/>
            <person name="Fujimori K."/>
            <person name="Tanai H."/>
            <person name="Kimata M."/>
            <person name="Watanabe M."/>
            <person name="Hiraoka S."/>
            <person name="Chiba Y."/>
            <person name="Ishida S."/>
            <person name="Ono Y."/>
            <person name="Takiguchi S."/>
            <person name="Watanabe S."/>
            <person name="Yosida M."/>
            <person name="Hotuta T."/>
            <person name="Kusano J."/>
            <person name="Kanehori K."/>
            <person name="Takahashi-Fujii A."/>
            <person name="Hara H."/>
            <person name="Tanase T.-O."/>
            <person name="Nomura Y."/>
            <person name="Togiya S."/>
            <person name="Komai F."/>
            <person name="Hara R."/>
            <person name="Takeuchi K."/>
            <person name="Arita M."/>
            <person name="Imose N."/>
            <person name="Musashino K."/>
            <person name="Yuuki H."/>
            <person name="Oshima A."/>
            <person name="Sasaki N."/>
            <person name="Aotsuka S."/>
            <person name="Yoshikawa Y."/>
            <person name="Matsunawa H."/>
            <person name="Ichihara T."/>
            <person name="Shiohata N."/>
            <person name="Sano S."/>
            <person name="Moriya S."/>
            <person name="Momiyama H."/>
            <person name="Satoh N."/>
            <person name="Takami S."/>
            <person name="Terashima Y."/>
            <person name="Suzuki O."/>
            <person name="Nakagawa S."/>
            <person name="Senoh A."/>
            <person name="Mizoguchi H."/>
            <person name="Goto Y."/>
            <person name="Shimizu F."/>
            <person name="Wakebe H."/>
            <person name="Hishigaki H."/>
            <person name="Watanabe T."/>
            <person name="Sugiyama A."/>
            <person name="Takemoto M."/>
            <person name="Kawakami B."/>
            <person name="Yamazaki M."/>
            <person name="Watanabe K."/>
            <person name="Kumagai A."/>
            <person name="Itakura S."/>
            <person name="Fukuzumi Y."/>
            <person name="Fujimori Y."/>
            <person name="Komiyama M."/>
            <person name="Tashiro H."/>
            <person name="Tanigami A."/>
            <person name="Fujiwara T."/>
            <person name="Ono T."/>
            <person name="Yamada K."/>
            <person name="Fujii Y."/>
            <person name="Ozaki K."/>
            <person name="Hirao M."/>
            <person name="Ohmori Y."/>
            <person name="Kawabata A."/>
            <person name="Hikiji T."/>
            <person name="Kobatake N."/>
            <person name="Inagaki H."/>
            <person name="Ikema Y."/>
            <person name="Okamoto S."/>
            <person name="Okitani R."/>
            <person name="Kawakami T."/>
            <person name="Noguchi S."/>
            <person name="Itoh T."/>
            <person name="Shigeta K."/>
            <person name="Senba T."/>
            <person name="Matsumura K."/>
            <person name="Nakajima Y."/>
            <person name="Mizuno T."/>
            <person name="Morinaga M."/>
            <person name="Sasaki M."/>
            <person name="Togashi T."/>
            <person name="Oyama M."/>
            <person name="Hata H."/>
            <person name="Watanabe M."/>
            <person name="Komatsu T."/>
            <person name="Mizushima-Sugano J."/>
            <person name="Satoh T."/>
            <person name="Shirai Y."/>
            <person name="Takahashi Y."/>
            <person name="Nakagawa K."/>
            <person name="Okumura K."/>
            <person name="Nagase T."/>
            <person name="Nomura N."/>
            <person name="Kikuchi H."/>
            <person name="Masuho Y."/>
            <person name="Yamashita R."/>
            <person name="Nakai K."/>
            <person name="Yada T."/>
            <person name="Nakamura Y."/>
            <person name="Ohara O."/>
            <person name="Isogai T."/>
            <person name="Sugano S."/>
        </authorList>
    </citation>
    <scope>NUCLEOTIDE SEQUENCE [LARGE SCALE MRNA] (ISOFORM 1)</scope>
    <source>
        <tissue>Pericardium</tissue>
    </source>
</reference>
<reference key="4">
    <citation type="journal article" date="2006" name="Nature">
        <title>Human chromosome 11 DNA sequence and analysis including novel gene identification.</title>
        <authorList>
            <person name="Taylor T.D."/>
            <person name="Noguchi H."/>
            <person name="Totoki Y."/>
            <person name="Toyoda A."/>
            <person name="Kuroki Y."/>
            <person name="Dewar K."/>
            <person name="Lloyd C."/>
            <person name="Itoh T."/>
            <person name="Takeda T."/>
            <person name="Kim D.-W."/>
            <person name="She X."/>
            <person name="Barlow K.F."/>
            <person name="Bloom T."/>
            <person name="Bruford E."/>
            <person name="Chang J.L."/>
            <person name="Cuomo C.A."/>
            <person name="Eichler E."/>
            <person name="FitzGerald M.G."/>
            <person name="Jaffe D.B."/>
            <person name="LaButti K."/>
            <person name="Nicol R."/>
            <person name="Park H.-S."/>
            <person name="Seaman C."/>
            <person name="Sougnez C."/>
            <person name="Yang X."/>
            <person name="Zimmer A.R."/>
            <person name="Zody M.C."/>
            <person name="Birren B.W."/>
            <person name="Nusbaum C."/>
            <person name="Fujiyama A."/>
            <person name="Hattori M."/>
            <person name="Rogers J."/>
            <person name="Lander E.S."/>
            <person name="Sakaki Y."/>
        </authorList>
    </citation>
    <scope>NUCLEOTIDE SEQUENCE [LARGE SCALE GENOMIC DNA]</scope>
</reference>
<reference key="5">
    <citation type="submission" date="2005-09" db="EMBL/GenBank/DDBJ databases">
        <authorList>
            <person name="Mural R.J."/>
            <person name="Istrail S."/>
            <person name="Sutton G.G."/>
            <person name="Florea L."/>
            <person name="Halpern A.L."/>
            <person name="Mobarry C.M."/>
            <person name="Lippert R."/>
            <person name="Walenz B."/>
            <person name="Shatkay H."/>
            <person name="Dew I."/>
            <person name="Miller J.R."/>
            <person name="Flanigan M.J."/>
            <person name="Edwards N.J."/>
            <person name="Bolanos R."/>
            <person name="Fasulo D."/>
            <person name="Halldorsson B.V."/>
            <person name="Hannenhalli S."/>
            <person name="Turner R."/>
            <person name="Yooseph S."/>
            <person name="Lu F."/>
            <person name="Nusskern D.R."/>
            <person name="Shue B.C."/>
            <person name="Zheng X.H."/>
            <person name="Zhong F."/>
            <person name="Delcher A.L."/>
            <person name="Huson D.H."/>
            <person name="Kravitz S.A."/>
            <person name="Mouchard L."/>
            <person name="Reinert K."/>
            <person name="Remington K.A."/>
            <person name="Clark A.G."/>
            <person name="Waterman M.S."/>
            <person name="Eichler E.E."/>
            <person name="Adams M.D."/>
            <person name="Hunkapiller M.W."/>
            <person name="Myers E.W."/>
            <person name="Venter J.C."/>
        </authorList>
    </citation>
    <scope>NUCLEOTIDE SEQUENCE [LARGE SCALE GENOMIC DNA]</scope>
</reference>
<reference key="6">
    <citation type="journal article" date="2004" name="Genome Res.">
        <title>The status, quality, and expansion of the NIH full-length cDNA project: the Mammalian Gene Collection (MGC).</title>
        <authorList>
            <consortium name="The MGC Project Team"/>
        </authorList>
    </citation>
    <scope>NUCLEOTIDE SEQUENCE [LARGE SCALE MRNA] (ISOFORMS 1 AND 2)</scope>
    <source>
        <tissue>Brain</tissue>
        <tissue>Skeletal muscle</tissue>
    </source>
</reference>
<reference key="7">
    <citation type="journal article" date="2008" name="Proc. Natl. Acad. Sci. U.S.A.">
        <title>A quantitative atlas of mitotic phosphorylation.</title>
        <authorList>
            <person name="Dephoure N."/>
            <person name="Zhou C."/>
            <person name="Villen J."/>
            <person name="Beausoleil S.A."/>
            <person name="Bakalarski C.E."/>
            <person name="Elledge S.J."/>
            <person name="Gygi S.P."/>
        </authorList>
    </citation>
    <scope>IDENTIFICATION BY MASS SPECTROMETRY [LARGE SCALE ANALYSIS]</scope>
    <source>
        <tissue>Cervix carcinoma</tissue>
    </source>
</reference>
<reference key="8">
    <citation type="journal article" date="2014" name="J. Cell Sci.">
        <title>GAS2-like proteins mediate communication between microtubules and actin through interactions with end-binding proteins.</title>
        <authorList>
            <person name="Stroud M.J."/>
            <person name="Nazgiewicz A."/>
            <person name="McKenzie E.A."/>
            <person name="Wang Y."/>
            <person name="Kammerer R.A."/>
            <person name="Ballestrem C."/>
        </authorList>
    </citation>
    <scope>SUBCELLULAR LOCATION</scope>
</reference>
<reference key="9">
    <citation type="journal article" date="2014" name="J. Proteomics">
        <title>An enzyme assisted RP-RPLC approach for in-depth analysis of human liver phosphoproteome.</title>
        <authorList>
            <person name="Bian Y."/>
            <person name="Song C."/>
            <person name="Cheng K."/>
            <person name="Dong M."/>
            <person name="Wang F."/>
            <person name="Huang J."/>
            <person name="Sun D."/>
            <person name="Wang L."/>
            <person name="Ye M."/>
            <person name="Zou H."/>
        </authorList>
    </citation>
    <scope>PHOSPHORYLATION [LARGE SCALE ANALYSIS] AT SER-187</scope>
    <scope>IDENTIFICATION BY MASS SPECTROMETRY [LARGE SCALE ANALYSIS]</scope>
    <source>
        <tissue>Liver</tissue>
    </source>
</reference>
<reference key="10">
    <citation type="journal article" date="2021" name="Dev. Cell">
        <title>Cochlear supporting cells require GAS2 for cytoskeletal architecture and hearing.</title>
        <authorList>
            <person name="Chen T."/>
            <person name="Rohacek A.M."/>
            <person name="Caporizzo M."/>
            <person name="Nankali A."/>
            <person name="Smits J.J."/>
            <person name="Oostrik J."/>
            <person name="Lanting C.P."/>
            <person name="Kuecuek E."/>
            <person name="Gilissen C."/>
            <person name="van de Kamp J.M."/>
            <person name="Pennings R.J.E."/>
            <person name="Rakowiecki S.M."/>
            <person name="Kaestner K.H."/>
            <person name="Ohlemiller K.K."/>
            <person name="Oghalai J.S."/>
            <person name="Kremer H."/>
            <person name="Prosser B.L."/>
            <person name="Epstein D.J."/>
        </authorList>
    </citation>
    <scope>INVOLVEMENT IN DFNB125</scope>
</reference>
<sequence length="313" mass="34945">MCTALSPKVRSGPGLSDMHQYSQWLASRHEANLLPMKEDLALWLTNLLGKEITAETFMEKLDNGALLCQLAETMQEKFKESMDANKPTKNLPLKKIPCKTSAPSGSFFARDNTANFLSWCRDLGVDETCLFESEGLVLHKQPREVCLCLLELGRIAARYGVEPPGLIKLEKEIEQEETLSAPSPSPSPSSKSSGKKSTGNLLDDAVKRISEDPPCKCPNKFCVERLSQGRYRVGEKILFIRMLHNKHVMVRVGGGWETFAGYLLKHDPCRMLQISRVDGKTSPIQSKSPTLKDMNPDNYLVVSASYKAKKEIK</sequence>
<evidence type="ECO:0000250" key="1"/>
<evidence type="ECO:0000250" key="2">
    <source>
        <dbReference type="UniProtKB" id="P11862"/>
    </source>
</evidence>
<evidence type="ECO:0000255" key="3">
    <source>
        <dbReference type="PROSITE-ProRule" id="PRU00044"/>
    </source>
</evidence>
<evidence type="ECO:0000255" key="4">
    <source>
        <dbReference type="PROSITE-ProRule" id="PRU00792"/>
    </source>
</evidence>
<evidence type="ECO:0000256" key="5">
    <source>
        <dbReference type="SAM" id="MobiDB-lite"/>
    </source>
</evidence>
<evidence type="ECO:0000269" key="6">
    <source>
    </source>
</evidence>
<evidence type="ECO:0000269" key="7">
    <source>
    </source>
</evidence>
<evidence type="ECO:0000303" key="8">
    <source>
    </source>
</evidence>
<evidence type="ECO:0000305" key="9"/>
<evidence type="ECO:0007744" key="10">
    <source>
    </source>
</evidence>
<name>GAS2_HUMAN</name>
<proteinExistence type="evidence at protein level"/>
<dbReference type="EMBL" id="U95032">
    <property type="protein sequence ID" value="AAC52058.1"/>
    <property type="molecule type" value="mRNA"/>
</dbReference>
<dbReference type="EMBL" id="CR450285">
    <property type="protein sequence ID" value="CAG29281.1"/>
    <property type="molecule type" value="mRNA"/>
</dbReference>
<dbReference type="EMBL" id="AK313734">
    <property type="protein sequence ID" value="BAG36475.1"/>
    <property type="molecule type" value="mRNA"/>
</dbReference>
<dbReference type="EMBL" id="AC006299">
    <property type="status" value="NOT_ANNOTATED_CDS"/>
    <property type="molecule type" value="Genomic_DNA"/>
</dbReference>
<dbReference type="EMBL" id="AC103801">
    <property type="status" value="NOT_ANNOTATED_CDS"/>
    <property type="molecule type" value="Genomic_DNA"/>
</dbReference>
<dbReference type="EMBL" id="CH471064">
    <property type="protein sequence ID" value="EAW68317.1"/>
    <property type="molecule type" value="Genomic_DNA"/>
</dbReference>
<dbReference type="EMBL" id="CH471064">
    <property type="protein sequence ID" value="EAW68318.1"/>
    <property type="molecule type" value="Genomic_DNA"/>
</dbReference>
<dbReference type="EMBL" id="BC013326">
    <property type="protein sequence ID" value="AAH13326.1"/>
    <property type="molecule type" value="mRNA"/>
</dbReference>
<dbReference type="EMBL" id="BC040470">
    <property type="protein sequence ID" value="AAH40470.1"/>
    <property type="molecule type" value="mRNA"/>
</dbReference>
<dbReference type="CCDS" id="CCDS7858.1">
    <molecule id="O43903-1"/>
</dbReference>
<dbReference type="RefSeq" id="NP_001137302.1">
    <molecule id="O43903-1"/>
    <property type="nucleotide sequence ID" value="NM_001143830.3"/>
</dbReference>
<dbReference type="RefSeq" id="NP_001378863.1">
    <molecule id="O43903-1"/>
    <property type="nucleotide sequence ID" value="NM_001391934.1"/>
</dbReference>
<dbReference type="RefSeq" id="NP_001378864.1">
    <molecule id="O43903-1"/>
    <property type="nucleotide sequence ID" value="NM_001391935.1"/>
</dbReference>
<dbReference type="RefSeq" id="NP_001378865.1">
    <molecule id="O43903-1"/>
    <property type="nucleotide sequence ID" value="NM_001391936.1"/>
</dbReference>
<dbReference type="RefSeq" id="NP_001378866.1">
    <molecule id="O43903-1"/>
    <property type="nucleotide sequence ID" value="NM_001391937.1"/>
</dbReference>
<dbReference type="RefSeq" id="NP_005247.1">
    <molecule id="O43903-1"/>
    <property type="nucleotide sequence ID" value="NM_005256.5"/>
</dbReference>
<dbReference type="RefSeq" id="NP_808221.1">
    <molecule id="O43903-1"/>
    <property type="nucleotide sequence ID" value="NM_177553.4"/>
</dbReference>
<dbReference type="RefSeq" id="XP_016873017.1">
    <property type="nucleotide sequence ID" value="XM_017017528.1"/>
</dbReference>
<dbReference type="RefSeq" id="XP_016873018.1">
    <property type="nucleotide sequence ID" value="XM_017017529.1"/>
</dbReference>
<dbReference type="RefSeq" id="XP_016873019.1">
    <property type="nucleotide sequence ID" value="XM_017017530.1"/>
</dbReference>
<dbReference type="RefSeq" id="XP_016873020.1">
    <property type="nucleotide sequence ID" value="XM_017017531.1"/>
</dbReference>
<dbReference type="RefSeq" id="XP_047282702.1">
    <molecule id="O43903-1"/>
    <property type="nucleotide sequence ID" value="XM_047426746.1"/>
</dbReference>
<dbReference type="RefSeq" id="XP_047282703.1">
    <molecule id="O43903-1"/>
    <property type="nucleotide sequence ID" value="XM_047426747.1"/>
</dbReference>
<dbReference type="RefSeq" id="XP_054224361.1">
    <molecule id="O43903-1"/>
    <property type="nucleotide sequence ID" value="XM_054368386.1"/>
</dbReference>
<dbReference type="RefSeq" id="XP_054224362.1">
    <molecule id="O43903-1"/>
    <property type="nucleotide sequence ID" value="XM_054368387.1"/>
</dbReference>
<dbReference type="BMRB" id="O43903"/>
<dbReference type="SMR" id="O43903"/>
<dbReference type="BioGRID" id="108890">
    <property type="interactions" value="14"/>
</dbReference>
<dbReference type="FunCoup" id="O43903">
    <property type="interactions" value="381"/>
</dbReference>
<dbReference type="IntAct" id="O43903">
    <property type="interactions" value="2"/>
</dbReference>
<dbReference type="STRING" id="9606.ENSP00000401145"/>
<dbReference type="iPTMnet" id="O43903"/>
<dbReference type="PhosphoSitePlus" id="O43903"/>
<dbReference type="BioMuta" id="GAS2"/>
<dbReference type="jPOST" id="O43903"/>
<dbReference type="MassIVE" id="O43903"/>
<dbReference type="PaxDb" id="9606-ENSP00000401145"/>
<dbReference type="PeptideAtlas" id="O43903"/>
<dbReference type="ProteomicsDB" id="49224">
    <molecule id="O43903-1"/>
</dbReference>
<dbReference type="ProteomicsDB" id="69093"/>
<dbReference type="Antibodypedia" id="12653">
    <property type="antibodies" value="322 antibodies from 33 providers"/>
</dbReference>
<dbReference type="DNASU" id="2620"/>
<dbReference type="Ensembl" id="ENST00000278187.7">
    <molecule id="O43903-1"/>
    <property type="protein sequence ID" value="ENSP00000278187.3"/>
    <property type="gene ID" value="ENSG00000148935.12"/>
</dbReference>
<dbReference type="Ensembl" id="ENST00000454584.7">
    <molecule id="O43903-1"/>
    <property type="protein sequence ID" value="ENSP00000401145.2"/>
    <property type="gene ID" value="ENSG00000148935.12"/>
</dbReference>
<dbReference type="Ensembl" id="ENST00000524701.5">
    <molecule id="O43903-2"/>
    <property type="protein sequence ID" value="ENSP00000432026.1"/>
    <property type="gene ID" value="ENSG00000148935.12"/>
</dbReference>
<dbReference type="Ensembl" id="ENST00000630668.2">
    <molecule id="O43903-2"/>
    <property type="protein sequence ID" value="ENSP00000485708.1"/>
    <property type="gene ID" value="ENSG00000148935.12"/>
</dbReference>
<dbReference type="GeneID" id="2620"/>
<dbReference type="KEGG" id="hsa:2620"/>
<dbReference type="MANE-Select" id="ENST00000454584.7">
    <property type="protein sequence ID" value="ENSP00000401145.2"/>
    <property type="RefSeq nucleotide sequence ID" value="NM_001143830.3"/>
    <property type="RefSeq protein sequence ID" value="NP_001137302.1"/>
</dbReference>
<dbReference type="UCSC" id="uc001mqm.4">
    <molecule id="O43903-1"/>
    <property type="organism name" value="human"/>
</dbReference>
<dbReference type="AGR" id="HGNC:4167"/>
<dbReference type="CTD" id="2620"/>
<dbReference type="DisGeNET" id="2620"/>
<dbReference type="GeneCards" id="GAS2"/>
<dbReference type="HGNC" id="HGNC:4167">
    <property type="gene designation" value="GAS2"/>
</dbReference>
<dbReference type="HPA" id="ENSG00000148935">
    <property type="expression patterns" value="Tissue enhanced (liver)"/>
</dbReference>
<dbReference type="MalaCards" id="GAS2"/>
<dbReference type="MIM" id="602835">
    <property type="type" value="gene"/>
</dbReference>
<dbReference type="MIM" id="620877">
    <property type="type" value="phenotype"/>
</dbReference>
<dbReference type="neXtProt" id="NX_O43903"/>
<dbReference type="OpenTargets" id="ENSG00000148935"/>
<dbReference type="PharmGKB" id="PA28580"/>
<dbReference type="VEuPathDB" id="HostDB:ENSG00000148935"/>
<dbReference type="eggNOG" id="KOG0516">
    <property type="taxonomic scope" value="Eukaryota"/>
</dbReference>
<dbReference type="GeneTree" id="ENSGT00940000155755"/>
<dbReference type="HOGENOM" id="CLU_025484_1_0_1"/>
<dbReference type="InParanoid" id="O43903"/>
<dbReference type="OMA" id="GLHGCDY"/>
<dbReference type="OrthoDB" id="2250192at2759"/>
<dbReference type="PAN-GO" id="O43903">
    <property type="GO annotations" value="4 GO annotations based on evolutionary models"/>
</dbReference>
<dbReference type="PhylomeDB" id="O43903"/>
<dbReference type="TreeFam" id="TF323754"/>
<dbReference type="PathwayCommons" id="O43903"/>
<dbReference type="Reactome" id="R-HSA-264870">
    <property type="pathway name" value="Caspase-mediated cleavage of cytoskeletal proteins"/>
</dbReference>
<dbReference type="SignaLink" id="O43903"/>
<dbReference type="SIGNOR" id="O43903"/>
<dbReference type="BioGRID-ORCS" id="2620">
    <property type="hits" value="20 hits in 1153 CRISPR screens"/>
</dbReference>
<dbReference type="ChiTaRS" id="GAS2">
    <property type="organism name" value="human"/>
</dbReference>
<dbReference type="GeneWiki" id="GAS2"/>
<dbReference type="GenomeRNAi" id="2620"/>
<dbReference type="Pharos" id="O43903">
    <property type="development level" value="Tbio"/>
</dbReference>
<dbReference type="PRO" id="PR:O43903"/>
<dbReference type="Proteomes" id="UP000005640">
    <property type="component" value="Chromosome 11"/>
</dbReference>
<dbReference type="RNAct" id="O43903">
    <property type="molecule type" value="protein"/>
</dbReference>
<dbReference type="Bgee" id="ENSG00000148935">
    <property type="expression patterns" value="Expressed in trigeminal ganglion and 144 other cell types or tissues"/>
</dbReference>
<dbReference type="ExpressionAtlas" id="O43903">
    <property type="expression patterns" value="baseline and differential"/>
</dbReference>
<dbReference type="GO" id="GO:0005884">
    <property type="term" value="C:actin filament"/>
    <property type="evidence" value="ECO:0000304"/>
    <property type="project" value="ProtInc"/>
</dbReference>
<dbReference type="GO" id="GO:0005829">
    <property type="term" value="C:cytosol"/>
    <property type="evidence" value="ECO:0000304"/>
    <property type="project" value="Reactome"/>
</dbReference>
<dbReference type="GO" id="GO:0016020">
    <property type="term" value="C:membrane"/>
    <property type="evidence" value="ECO:0007669"/>
    <property type="project" value="UniProtKB-SubCell"/>
</dbReference>
<dbReference type="GO" id="GO:0001725">
    <property type="term" value="C:stress fiber"/>
    <property type="evidence" value="ECO:0007669"/>
    <property type="project" value="UniProtKB-SubCell"/>
</dbReference>
<dbReference type="GO" id="GO:0051015">
    <property type="term" value="F:actin filament binding"/>
    <property type="evidence" value="ECO:0000318"/>
    <property type="project" value="GO_Central"/>
</dbReference>
<dbReference type="GO" id="GO:0008017">
    <property type="term" value="F:microtubule binding"/>
    <property type="evidence" value="ECO:0007669"/>
    <property type="project" value="InterPro"/>
</dbReference>
<dbReference type="GO" id="GO:0051764">
    <property type="term" value="P:actin crosslink formation"/>
    <property type="evidence" value="ECO:0000318"/>
    <property type="project" value="GO_Central"/>
</dbReference>
<dbReference type="GO" id="GO:0001547">
    <property type="term" value="P:antral ovarian follicle growth"/>
    <property type="evidence" value="ECO:0007669"/>
    <property type="project" value="Ensembl"/>
</dbReference>
<dbReference type="GO" id="GO:0006915">
    <property type="term" value="P:apoptotic process"/>
    <property type="evidence" value="ECO:0000304"/>
    <property type="project" value="ProtInc"/>
</dbReference>
<dbReference type="GO" id="GO:0071711">
    <property type="term" value="P:basement membrane organization"/>
    <property type="evidence" value="ECO:0007669"/>
    <property type="project" value="Ensembl"/>
</dbReference>
<dbReference type="GO" id="GO:0001544">
    <property type="term" value="P:initiation of primordial ovarian follicle growth"/>
    <property type="evidence" value="ECO:0007669"/>
    <property type="project" value="Ensembl"/>
</dbReference>
<dbReference type="GO" id="GO:0030728">
    <property type="term" value="P:ovulation"/>
    <property type="evidence" value="ECO:0007669"/>
    <property type="project" value="Ensembl"/>
</dbReference>
<dbReference type="GO" id="GO:0051726">
    <property type="term" value="P:regulation of cell cycle"/>
    <property type="evidence" value="ECO:0007669"/>
    <property type="project" value="UniProtKB-KW"/>
</dbReference>
<dbReference type="GO" id="GO:0008360">
    <property type="term" value="P:regulation of cell shape"/>
    <property type="evidence" value="ECO:0007669"/>
    <property type="project" value="UniProtKB-KW"/>
</dbReference>
<dbReference type="GO" id="GO:0008593">
    <property type="term" value="P:regulation of Notch signaling pathway"/>
    <property type="evidence" value="ECO:0007669"/>
    <property type="project" value="Ensembl"/>
</dbReference>
<dbReference type="CDD" id="cd21267">
    <property type="entry name" value="CH_GAS2"/>
    <property type="match status" value="1"/>
</dbReference>
<dbReference type="FunFam" id="1.10.418.10:FF:000052">
    <property type="entry name" value="Growth arrest specific 2"/>
    <property type="match status" value="1"/>
</dbReference>
<dbReference type="FunFam" id="3.30.920.20:FF:000003">
    <property type="entry name" value="Growth arrest-specific 2 like 3"/>
    <property type="match status" value="1"/>
</dbReference>
<dbReference type="Gene3D" id="1.10.418.10">
    <property type="entry name" value="Calponin-like domain"/>
    <property type="match status" value="1"/>
</dbReference>
<dbReference type="Gene3D" id="3.30.920.20">
    <property type="entry name" value="Gas2-like domain"/>
    <property type="match status" value="1"/>
</dbReference>
<dbReference type="InterPro" id="IPR001715">
    <property type="entry name" value="CH_dom"/>
</dbReference>
<dbReference type="InterPro" id="IPR036872">
    <property type="entry name" value="CH_dom_sf"/>
</dbReference>
<dbReference type="InterPro" id="IPR003108">
    <property type="entry name" value="GAR_dom"/>
</dbReference>
<dbReference type="InterPro" id="IPR036534">
    <property type="entry name" value="GAR_dom_sf"/>
</dbReference>
<dbReference type="PANTHER" id="PTHR46756:SF9">
    <property type="entry name" value="GROWTH ARREST-SPECIFIC PROTEIN 2"/>
    <property type="match status" value="1"/>
</dbReference>
<dbReference type="PANTHER" id="PTHR46756">
    <property type="entry name" value="TRANSGELIN"/>
    <property type="match status" value="1"/>
</dbReference>
<dbReference type="Pfam" id="PF00307">
    <property type="entry name" value="CH"/>
    <property type="match status" value="1"/>
</dbReference>
<dbReference type="Pfam" id="PF02187">
    <property type="entry name" value="GAS2"/>
    <property type="match status" value="1"/>
</dbReference>
<dbReference type="SMART" id="SM00033">
    <property type="entry name" value="CH"/>
    <property type="match status" value="1"/>
</dbReference>
<dbReference type="SMART" id="SM00243">
    <property type="entry name" value="GAS2"/>
    <property type="match status" value="1"/>
</dbReference>
<dbReference type="SUPFAM" id="SSF47576">
    <property type="entry name" value="Calponin-homology domain, CH-domain"/>
    <property type="match status" value="1"/>
</dbReference>
<dbReference type="SUPFAM" id="SSF143575">
    <property type="entry name" value="GAS2 domain-like"/>
    <property type="match status" value="1"/>
</dbReference>
<dbReference type="PROSITE" id="PS50021">
    <property type="entry name" value="CH"/>
    <property type="match status" value="1"/>
</dbReference>
<dbReference type="PROSITE" id="PS51460">
    <property type="entry name" value="GAR"/>
    <property type="match status" value="1"/>
</dbReference>
<gene>
    <name type="primary">GAS2</name>
</gene>
<feature type="chain" id="PRO_0000190440" description="Growth arrest-specific protein 2">
    <location>
        <begin position="1"/>
        <end position="313"/>
    </location>
</feature>
<feature type="domain" description="Calponin-homology (CH)" evidence="3">
    <location>
        <begin position="34"/>
        <end position="156"/>
    </location>
</feature>
<feature type="domain" description="GAR" evidence="4">
    <location>
        <begin position="197"/>
        <end position="270"/>
    </location>
</feature>
<feature type="region of interest" description="Disordered" evidence="5">
    <location>
        <begin position="175"/>
        <end position="199"/>
    </location>
</feature>
<feature type="compositionally biased region" description="Low complexity" evidence="5">
    <location>
        <begin position="188"/>
        <end position="197"/>
    </location>
</feature>
<feature type="site" description="Cleavage; by a caspase during apoptosis">
    <location>
        <begin position="278"/>
        <end position="279"/>
    </location>
</feature>
<feature type="modified residue" description="Phosphoserine" evidence="2">
    <location>
        <position position="183"/>
    </location>
</feature>
<feature type="modified residue" description="Phosphoserine" evidence="10">
    <location>
        <position position="187"/>
    </location>
</feature>
<feature type="splice variant" id="VSP_055080" description="In isoform 2." evidence="8">
    <original>VLHKQ</original>
    <variation>GFGGQ</variation>
    <location>
        <begin position="137"/>
        <end position="141"/>
    </location>
</feature>
<feature type="splice variant" id="VSP_055081" description="In isoform 2." evidence="8">
    <location>
        <begin position="142"/>
        <end position="313"/>
    </location>
</feature>
<accession>O43903</accession>
<accession>B2R9C8</accession>
<accession>D3DQZ0</accession>
<accession>Q6ICV8</accession>
<accession>Q7Z3X8</accession>
<organism>
    <name type="scientific">Homo sapiens</name>
    <name type="common">Human</name>
    <dbReference type="NCBI Taxonomy" id="9606"/>
    <lineage>
        <taxon>Eukaryota</taxon>
        <taxon>Metazoa</taxon>
        <taxon>Chordata</taxon>
        <taxon>Craniata</taxon>
        <taxon>Vertebrata</taxon>
        <taxon>Euteleostomi</taxon>
        <taxon>Mammalia</taxon>
        <taxon>Eutheria</taxon>
        <taxon>Euarchontoglires</taxon>
        <taxon>Primates</taxon>
        <taxon>Haplorrhini</taxon>
        <taxon>Catarrhini</taxon>
        <taxon>Hominidae</taxon>
        <taxon>Homo</taxon>
    </lineage>
</organism>
<keyword id="KW-0025">Alternative splicing</keyword>
<keyword id="KW-0053">Apoptosis</keyword>
<keyword id="KW-0131">Cell cycle</keyword>
<keyword id="KW-0133">Cell shape</keyword>
<keyword id="KW-0963">Cytoplasm</keyword>
<keyword id="KW-0206">Cytoskeleton</keyword>
<keyword id="KW-0209">Deafness</keyword>
<keyword id="KW-0338">Growth arrest</keyword>
<keyword id="KW-0472">Membrane</keyword>
<keyword id="KW-1010">Non-syndromic deafness</keyword>
<keyword id="KW-0597">Phosphoprotein</keyword>
<keyword id="KW-1267">Proteomics identification</keyword>
<keyword id="KW-1185">Reference proteome</keyword>
<protein>
    <recommendedName>
        <fullName>Growth arrest-specific protein 2</fullName>
        <shortName>GAS-2</shortName>
    </recommendedName>
</protein>